<proteinExistence type="inferred from homology"/>
<gene>
    <name evidence="1" type="primary">serC</name>
    <name type="ordered locus">LHK_01839</name>
</gene>
<accession>C1D8N3</accession>
<protein>
    <recommendedName>
        <fullName evidence="1">Phosphoserine aminotransferase</fullName>
        <ecNumber evidence="1">2.6.1.52</ecNumber>
    </recommendedName>
    <alternativeName>
        <fullName evidence="1">Phosphohydroxythreonine aminotransferase</fullName>
        <shortName evidence="1">PSAT</shortName>
    </alternativeName>
</protein>
<dbReference type="EC" id="2.6.1.52" evidence="1"/>
<dbReference type="EMBL" id="CP001154">
    <property type="protein sequence ID" value="ACO74823.1"/>
    <property type="molecule type" value="Genomic_DNA"/>
</dbReference>
<dbReference type="RefSeq" id="WP_012697309.1">
    <property type="nucleotide sequence ID" value="NC_012559.1"/>
</dbReference>
<dbReference type="SMR" id="C1D8N3"/>
<dbReference type="STRING" id="557598.LHK_01839"/>
<dbReference type="KEGG" id="lhk:LHK_01839"/>
<dbReference type="eggNOG" id="COG1932">
    <property type="taxonomic scope" value="Bacteria"/>
</dbReference>
<dbReference type="HOGENOM" id="CLU_034866_0_2_4"/>
<dbReference type="UniPathway" id="UPA00135">
    <property type="reaction ID" value="UER00197"/>
</dbReference>
<dbReference type="UniPathway" id="UPA00244">
    <property type="reaction ID" value="UER00311"/>
</dbReference>
<dbReference type="Proteomes" id="UP000002010">
    <property type="component" value="Chromosome"/>
</dbReference>
<dbReference type="GO" id="GO:0005737">
    <property type="term" value="C:cytoplasm"/>
    <property type="evidence" value="ECO:0007669"/>
    <property type="project" value="UniProtKB-SubCell"/>
</dbReference>
<dbReference type="GO" id="GO:0004648">
    <property type="term" value="F:O-phospho-L-serine:2-oxoglutarate aminotransferase activity"/>
    <property type="evidence" value="ECO:0007669"/>
    <property type="project" value="UniProtKB-UniRule"/>
</dbReference>
<dbReference type="GO" id="GO:0030170">
    <property type="term" value="F:pyridoxal phosphate binding"/>
    <property type="evidence" value="ECO:0007669"/>
    <property type="project" value="UniProtKB-UniRule"/>
</dbReference>
<dbReference type="GO" id="GO:0006564">
    <property type="term" value="P:L-serine biosynthetic process"/>
    <property type="evidence" value="ECO:0007669"/>
    <property type="project" value="UniProtKB-UniRule"/>
</dbReference>
<dbReference type="GO" id="GO:0008615">
    <property type="term" value="P:pyridoxine biosynthetic process"/>
    <property type="evidence" value="ECO:0007669"/>
    <property type="project" value="UniProtKB-UniRule"/>
</dbReference>
<dbReference type="CDD" id="cd00611">
    <property type="entry name" value="PSAT_like"/>
    <property type="match status" value="1"/>
</dbReference>
<dbReference type="FunFam" id="3.40.640.10:FF:000010">
    <property type="entry name" value="Phosphoserine aminotransferase"/>
    <property type="match status" value="1"/>
</dbReference>
<dbReference type="FunFam" id="3.90.1150.10:FF:000006">
    <property type="entry name" value="Phosphoserine aminotransferase"/>
    <property type="match status" value="1"/>
</dbReference>
<dbReference type="Gene3D" id="3.90.1150.10">
    <property type="entry name" value="Aspartate Aminotransferase, domain 1"/>
    <property type="match status" value="1"/>
</dbReference>
<dbReference type="Gene3D" id="3.40.640.10">
    <property type="entry name" value="Type I PLP-dependent aspartate aminotransferase-like (Major domain)"/>
    <property type="match status" value="1"/>
</dbReference>
<dbReference type="HAMAP" id="MF_00160">
    <property type="entry name" value="SerC_aminotrans_5"/>
    <property type="match status" value="1"/>
</dbReference>
<dbReference type="InterPro" id="IPR000192">
    <property type="entry name" value="Aminotrans_V_dom"/>
</dbReference>
<dbReference type="InterPro" id="IPR020578">
    <property type="entry name" value="Aminotrans_V_PyrdxlP_BS"/>
</dbReference>
<dbReference type="InterPro" id="IPR022278">
    <property type="entry name" value="Pser_aminoTfrase"/>
</dbReference>
<dbReference type="InterPro" id="IPR015424">
    <property type="entry name" value="PyrdxlP-dep_Trfase"/>
</dbReference>
<dbReference type="InterPro" id="IPR015421">
    <property type="entry name" value="PyrdxlP-dep_Trfase_major"/>
</dbReference>
<dbReference type="InterPro" id="IPR015422">
    <property type="entry name" value="PyrdxlP-dep_Trfase_small"/>
</dbReference>
<dbReference type="NCBIfam" id="NF003764">
    <property type="entry name" value="PRK05355.1"/>
    <property type="match status" value="1"/>
</dbReference>
<dbReference type="NCBIfam" id="TIGR01364">
    <property type="entry name" value="serC_1"/>
    <property type="match status" value="1"/>
</dbReference>
<dbReference type="PANTHER" id="PTHR43247">
    <property type="entry name" value="PHOSPHOSERINE AMINOTRANSFERASE"/>
    <property type="match status" value="1"/>
</dbReference>
<dbReference type="PANTHER" id="PTHR43247:SF1">
    <property type="entry name" value="PHOSPHOSERINE AMINOTRANSFERASE"/>
    <property type="match status" value="1"/>
</dbReference>
<dbReference type="Pfam" id="PF00266">
    <property type="entry name" value="Aminotran_5"/>
    <property type="match status" value="1"/>
</dbReference>
<dbReference type="PIRSF" id="PIRSF000525">
    <property type="entry name" value="SerC"/>
    <property type="match status" value="1"/>
</dbReference>
<dbReference type="SUPFAM" id="SSF53383">
    <property type="entry name" value="PLP-dependent transferases"/>
    <property type="match status" value="1"/>
</dbReference>
<dbReference type="PROSITE" id="PS00595">
    <property type="entry name" value="AA_TRANSFER_CLASS_5"/>
    <property type="match status" value="1"/>
</dbReference>
<reference key="1">
    <citation type="journal article" date="2009" name="PLoS Genet.">
        <title>The complete genome and proteome of Laribacter hongkongensis reveal potential mechanisms for adaptations to different temperatures and habitats.</title>
        <authorList>
            <person name="Woo P.C.Y."/>
            <person name="Lau S.K.P."/>
            <person name="Tse H."/>
            <person name="Teng J.L.L."/>
            <person name="Curreem S.O."/>
            <person name="Tsang A.K.L."/>
            <person name="Fan R.Y.Y."/>
            <person name="Wong G.K.M."/>
            <person name="Huang Y."/>
            <person name="Loman N.J."/>
            <person name="Snyder L.A.S."/>
            <person name="Cai J.J."/>
            <person name="Huang J.-D."/>
            <person name="Mak W."/>
            <person name="Pallen M.J."/>
            <person name="Lok S."/>
            <person name="Yuen K.-Y."/>
        </authorList>
    </citation>
    <scope>NUCLEOTIDE SEQUENCE [LARGE SCALE GENOMIC DNA]</scope>
    <source>
        <strain>HLHK9</strain>
    </source>
</reference>
<feature type="chain" id="PRO_1000203544" description="Phosphoserine aminotransferase">
    <location>
        <begin position="1"/>
        <end position="359"/>
    </location>
</feature>
<feature type="binding site" evidence="1">
    <location>
        <position position="41"/>
    </location>
    <ligand>
        <name>L-glutamate</name>
        <dbReference type="ChEBI" id="CHEBI:29985"/>
    </ligand>
</feature>
<feature type="binding site" evidence="1">
    <location>
        <position position="101"/>
    </location>
    <ligand>
        <name>pyridoxal 5'-phosphate</name>
        <dbReference type="ChEBI" id="CHEBI:597326"/>
    </ligand>
</feature>
<feature type="binding site" evidence="1">
    <location>
        <position position="151"/>
    </location>
    <ligand>
        <name>pyridoxal 5'-phosphate</name>
        <dbReference type="ChEBI" id="CHEBI:597326"/>
    </ligand>
</feature>
<feature type="binding site" evidence="1">
    <location>
        <position position="170"/>
    </location>
    <ligand>
        <name>pyridoxal 5'-phosphate</name>
        <dbReference type="ChEBI" id="CHEBI:597326"/>
    </ligand>
</feature>
<feature type="binding site" evidence="1">
    <location>
        <position position="193"/>
    </location>
    <ligand>
        <name>pyridoxal 5'-phosphate</name>
        <dbReference type="ChEBI" id="CHEBI:597326"/>
    </ligand>
</feature>
<feature type="binding site" evidence="1">
    <location>
        <begin position="235"/>
        <end position="236"/>
    </location>
    <ligand>
        <name>pyridoxal 5'-phosphate</name>
        <dbReference type="ChEBI" id="CHEBI:597326"/>
    </ligand>
</feature>
<feature type="modified residue" description="N6-(pyridoxal phosphate)lysine" evidence="1">
    <location>
        <position position="194"/>
    </location>
</feature>
<organism>
    <name type="scientific">Laribacter hongkongensis (strain HLHK9)</name>
    <dbReference type="NCBI Taxonomy" id="557598"/>
    <lineage>
        <taxon>Bacteria</taxon>
        <taxon>Pseudomonadati</taxon>
        <taxon>Pseudomonadota</taxon>
        <taxon>Betaproteobacteria</taxon>
        <taxon>Neisseriales</taxon>
        <taxon>Aquaspirillaceae</taxon>
        <taxon>Laribacter</taxon>
    </lineage>
</organism>
<sequence>MTIYNFSAGPALLPQDVLREAQRELTDWHGSGMSVMEMSHRGREFMSIHARAEADLRELLQIPDNYRVLFLQGGAHSQFSMVPMNLLRGKTTADYVITGHWGKVAIKEARCYGDMRIAATGEASGFNGIPPQSEWQPNPDAAYLHYVSNETIGGVQFPFIPESGVPLVCDMSSDFLSRPVDVSRFGLIFAGAQKNIGPAGLTLVIVREDLLGQTLPGTPTMFDYKIHADADSMYNTPPTYAIYMAGLVFQWLKDNGGVRGIQMRNEEKAGLLYHTIDSSDGFYRCPVDVECRSRMNVPFRLRTEVLEKRFVDEADMAGLLQLKGHRSVGGVRASIYNAMPFEGVKALVAFMAEFARRHG</sequence>
<evidence type="ECO:0000255" key="1">
    <source>
        <dbReference type="HAMAP-Rule" id="MF_00160"/>
    </source>
</evidence>
<name>SERC_LARHH</name>
<keyword id="KW-0028">Amino-acid biosynthesis</keyword>
<keyword id="KW-0032">Aminotransferase</keyword>
<keyword id="KW-0963">Cytoplasm</keyword>
<keyword id="KW-0663">Pyridoxal phosphate</keyword>
<keyword id="KW-0664">Pyridoxine biosynthesis</keyword>
<keyword id="KW-1185">Reference proteome</keyword>
<keyword id="KW-0718">Serine biosynthesis</keyword>
<keyword id="KW-0808">Transferase</keyword>
<comment type="function">
    <text evidence="1">Catalyzes the reversible conversion of 3-phosphohydroxypyruvate to phosphoserine and of 3-hydroxy-2-oxo-4-phosphonooxybutanoate to phosphohydroxythreonine.</text>
</comment>
<comment type="catalytic activity">
    <reaction evidence="1">
        <text>O-phospho-L-serine + 2-oxoglutarate = 3-phosphooxypyruvate + L-glutamate</text>
        <dbReference type="Rhea" id="RHEA:14329"/>
        <dbReference type="ChEBI" id="CHEBI:16810"/>
        <dbReference type="ChEBI" id="CHEBI:18110"/>
        <dbReference type="ChEBI" id="CHEBI:29985"/>
        <dbReference type="ChEBI" id="CHEBI:57524"/>
        <dbReference type="EC" id="2.6.1.52"/>
    </reaction>
</comment>
<comment type="catalytic activity">
    <reaction evidence="1">
        <text>4-(phosphooxy)-L-threonine + 2-oxoglutarate = (R)-3-hydroxy-2-oxo-4-phosphooxybutanoate + L-glutamate</text>
        <dbReference type="Rhea" id="RHEA:16573"/>
        <dbReference type="ChEBI" id="CHEBI:16810"/>
        <dbReference type="ChEBI" id="CHEBI:29985"/>
        <dbReference type="ChEBI" id="CHEBI:58452"/>
        <dbReference type="ChEBI" id="CHEBI:58538"/>
        <dbReference type="EC" id="2.6.1.52"/>
    </reaction>
</comment>
<comment type="cofactor">
    <cofactor evidence="1">
        <name>pyridoxal 5'-phosphate</name>
        <dbReference type="ChEBI" id="CHEBI:597326"/>
    </cofactor>
    <text evidence="1">Binds 1 pyridoxal phosphate per subunit.</text>
</comment>
<comment type="pathway">
    <text evidence="1">Amino-acid biosynthesis; L-serine biosynthesis; L-serine from 3-phospho-D-glycerate: step 2/3.</text>
</comment>
<comment type="pathway">
    <text evidence="1">Cofactor biosynthesis; pyridoxine 5'-phosphate biosynthesis; pyridoxine 5'-phosphate from D-erythrose 4-phosphate: step 3/5.</text>
</comment>
<comment type="subunit">
    <text evidence="1">Homodimer.</text>
</comment>
<comment type="subcellular location">
    <subcellularLocation>
        <location evidence="1">Cytoplasm</location>
    </subcellularLocation>
</comment>
<comment type="similarity">
    <text evidence="1">Belongs to the class-V pyridoxal-phosphate-dependent aminotransferase family. SerC subfamily.</text>
</comment>